<comment type="catalytic activity">
    <reaction>
        <text>L-seryl-[protein] + ATP = O-phospho-L-seryl-[protein] + ADP + H(+)</text>
        <dbReference type="Rhea" id="RHEA:17989"/>
        <dbReference type="Rhea" id="RHEA-COMP:9863"/>
        <dbReference type="Rhea" id="RHEA-COMP:11604"/>
        <dbReference type="ChEBI" id="CHEBI:15378"/>
        <dbReference type="ChEBI" id="CHEBI:29999"/>
        <dbReference type="ChEBI" id="CHEBI:30616"/>
        <dbReference type="ChEBI" id="CHEBI:83421"/>
        <dbReference type="ChEBI" id="CHEBI:456216"/>
        <dbReference type="EC" id="2.7.11.22"/>
    </reaction>
</comment>
<comment type="catalytic activity">
    <reaction>
        <text>L-threonyl-[protein] + ATP = O-phospho-L-threonyl-[protein] + ADP + H(+)</text>
        <dbReference type="Rhea" id="RHEA:46608"/>
        <dbReference type="Rhea" id="RHEA-COMP:11060"/>
        <dbReference type="Rhea" id="RHEA-COMP:11605"/>
        <dbReference type="ChEBI" id="CHEBI:15378"/>
        <dbReference type="ChEBI" id="CHEBI:30013"/>
        <dbReference type="ChEBI" id="CHEBI:30616"/>
        <dbReference type="ChEBI" id="CHEBI:61977"/>
        <dbReference type="ChEBI" id="CHEBI:456216"/>
        <dbReference type="EC" id="2.7.11.22"/>
    </reaction>
</comment>
<comment type="interaction">
    <interactant intactId="EBI-3953">
        <id>P43568</id>
    </interactant>
    <interactant intactId="EBI-4253">
        <id>P00546</id>
        <label>CDC28</label>
    </interactant>
    <organismsDiffer>false</organismsDiffer>
    <experiments>3</experiments>
</comment>
<comment type="similarity">
    <text evidence="3">Belongs to the protein kinase superfamily. CMGC Ser/Thr protein kinase family. CDC2/CDKX subfamily.</text>
</comment>
<dbReference type="EC" id="2.7.11.22"/>
<dbReference type="EMBL" id="U60192">
    <property type="protein sequence ID" value="AAB17052.1"/>
    <property type="molecule type" value="Genomic_DNA"/>
</dbReference>
<dbReference type="EMBL" id="D50617">
    <property type="protein sequence ID" value="BAA09209.1"/>
    <property type="molecule type" value="Genomic_DNA"/>
</dbReference>
<dbReference type="EMBL" id="BK006940">
    <property type="protein sequence ID" value="DAA12411.1"/>
    <property type="molecule type" value="Genomic_DNA"/>
</dbReference>
<dbReference type="PIR" id="S56225">
    <property type="entry name" value="S56225"/>
</dbReference>
<dbReference type="RefSeq" id="NP_116624.1">
    <property type="nucleotide sequence ID" value="NM_001179937.1"/>
</dbReference>
<dbReference type="SMR" id="P43568"/>
<dbReference type="BioGRID" id="31117">
    <property type="interactions" value="249"/>
</dbReference>
<dbReference type="DIP" id="DIP-1637N"/>
<dbReference type="FunCoup" id="P43568">
    <property type="interactions" value="422"/>
</dbReference>
<dbReference type="IntAct" id="P43568">
    <property type="interactions" value="6"/>
</dbReference>
<dbReference type="MINT" id="P43568"/>
<dbReference type="STRING" id="4932.YFL029C"/>
<dbReference type="BindingDB" id="P43568"/>
<dbReference type="ChEMBL" id="CHEMBL5003"/>
<dbReference type="iPTMnet" id="P43568"/>
<dbReference type="PaxDb" id="4932-YFL029C"/>
<dbReference type="PeptideAtlas" id="P43568"/>
<dbReference type="EnsemblFungi" id="YFL029C_mRNA">
    <property type="protein sequence ID" value="YFL029C"/>
    <property type="gene ID" value="YFL029C"/>
</dbReference>
<dbReference type="GeneID" id="850515"/>
<dbReference type="KEGG" id="sce:YFL029C"/>
<dbReference type="AGR" id="SGD:S000001865"/>
<dbReference type="SGD" id="S000001865">
    <property type="gene designation" value="CAK1"/>
</dbReference>
<dbReference type="VEuPathDB" id="FungiDB:YFL029C"/>
<dbReference type="eggNOG" id="KOG0594">
    <property type="taxonomic scope" value="Eukaryota"/>
</dbReference>
<dbReference type="GeneTree" id="ENSGT00940000174760"/>
<dbReference type="HOGENOM" id="CLU_000288_181_1_1"/>
<dbReference type="InParanoid" id="P43568"/>
<dbReference type="OMA" id="SIDITHC"/>
<dbReference type="OrthoDB" id="413582at2759"/>
<dbReference type="BioCyc" id="YEAST:G3O-30431-MONOMER"/>
<dbReference type="BRENDA" id="2.7.11.22">
    <property type="organism ID" value="984"/>
</dbReference>
<dbReference type="BioGRID-ORCS" id="850515">
    <property type="hits" value="4 hits in 13 CRISPR screens"/>
</dbReference>
<dbReference type="PRO" id="PR:P43568"/>
<dbReference type="Proteomes" id="UP000002311">
    <property type="component" value="Chromosome VI"/>
</dbReference>
<dbReference type="RNAct" id="P43568">
    <property type="molecule type" value="protein"/>
</dbReference>
<dbReference type="GO" id="GO:0005737">
    <property type="term" value="C:cytoplasm"/>
    <property type="evidence" value="ECO:0000314"/>
    <property type="project" value="SGD"/>
</dbReference>
<dbReference type="GO" id="GO:0005634">
    <property type="term" value="C:nucleus"/>
    <property type="evidence" value="ECO:0000318"/>
    <property type="project" value="GO_Central"/>
</dbReference>
<dbReference type="GO" id="GO:0005524">
    <property type="term" value="F:ATP binding"/>
    <property type="evidence" value="ECO:0007669"/>
    <property type="project" value="UniProtKB-KW"/>
</dbReference>
<dbReference type="GO" id="GO:0019912">
    <property type="term" value="F:cyclin-dependent protein kinase activating kinase activity"/>
    <property type="evidence" value="ECO:0000314"/>
    <property type="project" value="SGD"/>
</dbReference>
<dbReference type="GO" id="GO:0004693">
    <property type="term" value="F:cyclin-dependent protein serine/threonine kinase activity"/>
    <property type="evidence" value="ECO:0007669"/>
    <property type="project" value="UniProtKB-EC"/>
</dbReference>
<dbReference type="GO" id="GO:0106310">
    <property type="term" value="F:protein serine kinase activity"/>
    <property type="evidence" value="ECO:0007669"/>
    <property type="project" value="RHEA"/>
</dbReference>
<dbReference type="GO" id="GO:0004674">
    <property type="term" value="F:protein serine/threonine kinase activity"/>
    <property type="evidence" value="ECO:0000318"/>
    <property type="project" value="GO_Central"/>
</dbReference>
<dbReference type="GO" id="GO:0000086">
    <property type="term" value="P:G2/M transition of mitotic cell cycle"/>
    <property type="evidence" value="ECO:0000315"/>
    <property type="project" value="SGD"/>
</dbReference>
<dbReference type="GO" id="GO:0051321">
    <property type="term" value="P:meiotic cell cycle"/>
    <property type="evidence" value="ECO:0000315"/>
    <property type="project" value="SGD"/>
</dbReference>
<dbReference type="GO" id="GO:0060633">
    <property type="term" value="P:negative regulation of transcription initiation by RNA polymerase II"/>
    <property type="evidence" value="ECO:0000316"/>
    <property type="project" value="SGD"/>
</dbReference>
<dbReference type="GO" id="GO:0051726">
    <property type="term" value="P:regulation of cell cycle"/>
    <property type="evidence" value="ECO:0000318"/>
    <property type="project" value="GO_Central"/>
</dbReference>
<dbReference type="Gene3D" id="1.10.510.10">
    <property type="entry name" value="Transferase(Phosphotransferase) domain 1"/>
    <property type="match status" value="1"/>
</dbReference>
<dbReference type="InterPro" id="IPR011009">
    <property type="entry name" value="Kinase-like_dom_sf"/>
</dbReference>
<dbReference type="InterPro" id="IPR000719">
    <property type="entry name" value="Prot_kinase_dom"/>
</dbReference>
<dbReference type="InterPro" id="IPR008271">
    <property type="entry name" value="Ser/Thr_kinase_AS"/>
</dbReference>
<dbReference type="PANTHER" id="PTHR44167">
    <property type="entry name" value="OVARIAN-SPECIFIC SERINE/THREONINE-PROTEIN KINASE LOK-RELATED"/>
    <property type="match status" value="1"/>
</dbReference>
<dbReference type="PANTHER" id="PTHR44167:SF24">
    <property type="entry name" value="SERINE_THREONINE-PROTEIN KINASE CHK2"/>
    <property type="match status" value="1"/>
</dbReference>
<dbReference type="Pfam" id="PF00069">
    <property type="entry name" value="Pkinase"/>
    <property type="match status" value="1"/>
</dbReference>
<dbReference type="SMART" id="SM00220">
    <property type="entry name" value="S_TKc"/>
    <property type="match status" value="1"/>
</dbReference>
<dbReference type="SUPFAM" id="SSF56112">
    <property type="entry name" value="Protein kinase-like (PK-like)"/>
    <property type="match status" value="1"/>
</dbReference>
<dbReference type="PROSITE" id="PS50011">
    <property type="entry name" value="PROTEIN_KINASE_DOM"/>
    <property type="match status" value="1"/>
</dbReference>
<dbReference type="PROSITE" id="PS00108">
    <property type="entry name" value="PROTEIN_KINASE_ST"/>
    <property type="match status" value="1"/>
</dbReference>
<name>CAK1_YEAST</name>
<gene>
    <name type="primary">CAK1</name>
    <name type="synonym">CIV1</name>
    <name type="ordered locus">YFL029C</name>
</gene>
<reference key="1">
    <citation type="journal article" date="1996" name="Cell">
        <title>The Cdk-activating kinase (CAK) from budding yeast.</title>
        <authorList>
            <person name="Kaldis P."/>
            <person name="Sutton A."/>
            <person name="Solomon M.J."/>
        </authorList>
    </citation>
    <scope>NUCLEOTIDE SEQUENCE [GENOMIC DNA]</scope>
</reference>
<reference key="2">
    <citation type="journal article" date="1995" name="Nat. Genet.">
        <title>Analysis of the nucleotide sequence of chromosome VI from Saccharomyces cerevisiae.</title>
        <authorList>
            <person name="Murakami Y."/>
            <person name="Naitou M."/>
            <person name="Hagiwara H."/>
            <person name="Shibata T."/>
            <person name="Ozawa M."/>
            <person name="Sasanuma S."/>
            <person name="Sasanuma M."/>
            <person name="Tsuchiya Y."/>
            <person name="Soeda E."/>
            <person name="Yokoyama K."/>
            <person name="Yamazaki M."/>
            <person name="Tashiro H."/>
            <person name="Eki T."/>
        </authorList>
    </citation>
    <scope>NUCLEOTIDE SEQUENCE [LARGE SCALE GENOMIC DNA]</scope>
    <source>
        <strain>ATCC 204508 / S288c</strain>
    </source>
</reference>
<reference key="3">
    <citation type="journal article" date="2014" name="G3 (Bethesda)">
        <title>The reference genome sequence of Saccharomyces cerevisiae: Then and now.</title>
        <authorList>
            <person name="Engel S.R."/>
            <person name="Dietrich F.S."/>
            <person name="Fisk D.G."/>
            <person name="Binkley G."/>
            <person name="Balakrishnan R."/>
            <person name="Costanzo M.C."/>
            <person name="Dwight S.S."/>
            <person name="Hitz B.C."/>
            <person name="Karra K."/>
            <person name="Nash R.S."/>
            <person name="Weng S."/>
            <person name="Wong E.D."/>
            <person name="Lloyd P."/>
            <person name="Skrzypek M.S."/>
            <person name="Miyasato S.R."/>
            <person name="Simison M."/>
            <person name="Cherry J.M."/>
        </authorList>
    </citation>
    <scope>GENOME REANNOTATION</scope>
    <source>
        <strain>ATCC 204508 / S288c</strain>
    </source>
</reference>
<protein>
    <recommendedName>
        <fullName>Serine/threonine-protein kinase CAK1</fullName>
        <ecNumber>2.7.11.22</ecNumber>
    </recommendedName>
    <alternativeName>
        <fullName>CDK-activating kinase</fullName>
    </alternativeName>
</protein>
<feature type="chain" id="PRO_0000085690" description="Serine/threonine-protein kinase CAK1">
    <location>
        <begin position="1"/>
        <end position="368"/>
    </location>
</feature>
<feature type="domain" description="Protein kinase" evidence="1">
    <location>
        <begin position="1"/>
        <end position="368"/>
    </location>
</feature>
<feature type="active site" description="Proton acceptor" evidence="1 2">
    <location>
        <position position="156"/>
    </location>
</feature>
<keyword id="KW-0067">ATP-binding</keyword>
<keyword id="KW-0418">Kinase</keyword>
<keyword id="KW-0547">Nucleotide-binding</keyword>
<keyword id="KW-1185">Reference proteome</keyword>
<keyword id="KW-0723">Serine/threonine-protein kinase</keyword>
<keyword id="KW-0808">Transferase</keyword>
<accession>P43568</accession>
<accession>D6VTK1</accession>
<sequence>MKLDSIDITHCQLVKSTRTARIYRSDTYAIKCLALDFDIPPHNAKFEVSILNKLGNKCKHILPLLESKATDNNDLLLLFPFEEMNLYEFMQMHYKRDRRKKNPYYDLLNPSIPIVADPPVQKYTNQLDVNRYSLSFFRQMVEGIAFLHENKIIHRDIKPQNIMLTNNTSTVSPKLYIIDFGISYDMANNSQTSAEPMDSKVTDISTGIYKAPEVLFGVKCYDGGVDVWSLLIIISQWFQRETSRMGHVPAMIDDGSDDMNSDGSDFRLICSIFEKLGIPSIQKWEEVAQHGSVDAFVGMFGADGDGKYVLDQEKDVQISIVERNMPRLDEIADVKVKQKFINCILGMVSFSPNERWSCQRILQELEKP</sequence>
<organism>
    <name type="scientific">Saccharomyces cerevisiae (strain ATCC 204508 / S288c)</name>
    <name type="common">Baker's yeast</name>
    <dbReference type="NCBI Taxonomy" id="559292"/>
    <lineage>
        <taxon>Eukaryota</taxon>
        <taxon>Fungi</taxon>
        <taxon>Dikarya</taxon>
        <taxon>Ascomycota</taxon>
        <taxon>Saccharomycotina</taxon>
        <taxon>Saccharomycetes</taxon>
        <taxon>Saccharomycetales</taxon>
        <taxon>Saccharomycetaceae</taxon>
        <taxon>Saccharomyces</taxon>
    </lineage>
</organism>
<proteinExistence type="evidence at protein level"/>
<evidence type="ECO:0000255" key="1">
    <source>
        <dbReference type="PROSITE-ProRule" id="PRU00159"/>
    </source>
</evidence>
<evidence type="ECO:0000255" key="2">
    <source>
        <dbReference type="PROSITE-ProRule" id="PRU10027"/>
    </source>
</evidence>
<evidence type="ECO:0000305" key="3"/>